<organism>
    <name type="scientific">Coxiella burnetii (strain RSA 331 / Henzerling II)</name>
    <dbReference type="NCBI Taxonomy" id="360115"/>
    <lineage>
        <taxon>Bacteria</taxon>
        <taxon>Pseudomonadati</taxon>
        <taxon>Pseudomonadota</taxon>
        <taxon>Gammaproteobacteria</taxon>
        <taxon>Legionellales</taxon>
        <taxon>Coxiellaceae</taxon>
        <taxon>Coxiella</taxon>
    </lineage>
</organism>
<dbReference type="EC" id="5.3.1.6" evidence="1"/>
<dbReference type="EMBL" id="CP000890">
    <property type="protein sequence ID" value="ABX77663.1"/>
    <property type="molecule type" value="Genomic_DNA"/>
</dbReference>
<dbReference type="RefSeq" id="WP_005770348.1">
    <property type="nucleotide sequence ID" value="NC_010117.1"/>
</dbReference>
<dbReference type="SMR" id="A9NBF7"/>
<dbReference type="KEGG" id="cbs:COXBURSA331_A2178"/>
<dbReference type="HOGENOM" id="CLU_056590_1_1_6"/>
<dbReference type="UniPathway" id="UPA00115">
    <property type="reaction ID" value="UER00412"/>
</dbReference>
<dbReference type="GO" id="GO:0005829">
    <property type="term" value="C:cytosol"/>
    <property type="evidence" value="ECO:0007669"/>
    <property type="project" value="TreeGrafter"/>
</dbReference>
<dbReference type="GO" id="GO:0004751">
    <property type="term" value="F:ribose-5-phosphate isomerase activity"/>
    <property type="evidence" value="ECO:0007669"/>
    <property type="project" value="UniProtKB-UniRule"/>
</dbReference>
<dbReference type="GO" id="GO:0006014">
    <property type="term" value="P:D-ribose metabolic process"/>
    <property type="evidence" value="ECO:0007669"/>
    <property type="project" value="TreeGrafter"/>
</dbReference>
<dbReference type="GO" id="GO:0009052">
    <property type="term" value="P:pentose-phosphate shunt, non-oxidative branch"/>
    <property type="evidence" value="ECO:0007669"/>
    <property type="project" value="UniProtKB-UniRule"/>
</dbReference>
<dbReference type="CDD" id="cd01398">
    <property type="entry name" value="RPI_A"/>
    <property type="match status" value="1"/>
</dbReference>
<dbReference type="FunFam" id="3.30.70.260:FF:000004">
    <property type="entry name" value="Ribose-5-phosphate isomerase A"/>
    <property type="match status" value="1"/>
</dbReference>
<dbReference type="FunFam" id="3.40.50.1360:FF:000001">
    <property type="entry name" value="Ribose-5-phosphate isomerase A"/>
    <property type="match status" value="1"/>
</dbReference>
<dbReference type="Gene3D" id="3.30.70.260">
    <property type="match status" value="1"/>
</dbReference>
<dbReference type="Gene3D" id="3.40.50.1360">
    <property type="match status" value="1"/>
</dbReference>
<dbReference type="HAMAP" id="MF_00170">
    <property type="entry name" value="Rib_5P_isom_A"/>
    <property type="match status" value="1"/>
</dbReference>
<dbReference type="InterPro" id="IPR037171">
    <property type="entry name" value="NagB/RpiA_transferase-like"/>
</dbReference>
<dbReference type="InterPro" id="IPR020672">
    <property type="entry name" value="Ribose5P_isomerase_typA_subgr"/>
</dbReference>
<dbReference type="InterPro" id="IPR004788">
    <property type="entry name" value="Ribose5P_isomerase_type_A"/>
</dbReference>
<dbReference type="NCBIfam" id="NF001924">
    <property type="entry name" value="PRK00702.1"/>
    <property type="match status" value="1"/>
</dbReference>
<dbReference type="NCBIfam" id="TIGR00021">
    <property type="entry name" value="rpiA"/>
    <property type="match status" value="1"/>
</dbReference>
<dbReference type="PANTHER" id="PTHR11934">
    <property type="entry name" value="RIBOSE-5-PHOSPHATE ISOMERASE"/>
    <property type="match status" value="1"/>
</dbReference>
<dbReference type="PANTHER" id="PTHR11934:SF0">
    <property type="entry name" value="RIBOSE-5-PHOSPHATE ISOMERASE"/>
    <property type="match status" value="1"/>
</dbReference>
<dbReference type="Pfam" id="PF06026">
    <property type="entry name" value="Rib_5-P_isom_A"/>
    <property type="match status" value="1"/>
</dbReference>
<dbReference type="SUPFAM" id="SSF75445">
    <property type="entry name" value="D-ribose-5-phosphate isomerase (RpiA), lid domain"/>
    <property type="match status" value="1"/>
</dbReference>
<dbReference type="SUPFAM" id="SSF100950">
    <property type="entry name" value="NagB/RpiA/CoA transferase-like"/>
    <property type="match status" value="1"/>
</dbReference>
<proteinExistence type="inferred from homology"/>
<sequence length="220" mass="23848">MSKNELKKAAAMEAIQFVKNVNIVGVGTGSTVNYFIDALAEIKHQIEGAVASSVATENRLKEHRIPVVDLNSVSNVDVYVDGADEFNKHFYLTKGGGGALTREKIIAAAAKRFICIVDESKQVDVLGQFPLPIEVIPMARSFVAREIVKLKGDPVYRQGFTTDNGNVILDIHNLTILNPVELEAILNNIPGVIANGLFAQQPADDLLIGTPAGVQLHHRK</sequence>
<gene>
    <name evidence="1" type="primary">rpiA</name>
    <name type="ordered locus">COXBURSA331_A2178</name>
</gene>
<comment type="function">
    <text evidence="1">Catalyzes the reversible conversion of ribose-5-phosphate to ribulose 5-phosphate.</text>
</comment>
<comment type="catalytic activity">
    <reaction evidence="1">
        <text>aldehydo-D-ribose 5-phosphate = D-ribulose 5-phosphate</text>
        <dbReference type="Rhea" id="RHEA:14657"/>
        <dbReference type="ChEBI" id="CHEBI:58121"/>
        <dbReference type="ChEBI" id="CHEBI:58273"/>
        <dbReference type="EC" id="5.3.1.6"/>
    </reaction>
</comment>
<comment type="pathway">
    <text evidence="1">Carbohydrate degradation; pentose phosphate pathway; D-ribose 5-phosphate from D-ribulose 5-phosphate (non-oxidative stage): step 1/1.</text>
</comment>
<comment type="subunit">
    <text evidence="1">Homodimer.</text>
</comment>
<comment type="similarity">
    <text evidence="1">Belongs to the ribose 5-phosphate isomerase family.</text>
</comment>
<evidence type="ECO:0000255" key="1">
    <source>
        <dbReference type="HAMAP-Rule" id="MF_00170"/>
    </source>
</evidence>
<accession>A9NBF7</accession>
<protein>
    <recommendedName>
        <fullName evidence="1">Ribose-5-phosphate isomerase A</fullName>
        <ecNumber evidence="1">5.3.1.6</ecNumber>
    </recommendedName>
    <alternativeName>
        <fullName evidence="1">Phosphoriboisomerase A</fullName>
        <shortName evidence="1">PRI</shortName>
    </alternativeName>
</protein>
<reference key="1">
    <citation type="submission" date="2007-11" db="EMBL/GenBank/DDBJ databases">
        <title>Genome sequencing of phylogenetically and phenotypically diverse Coxiella burnetii isolates.</title>
        <authorList>
            <person name="Seshadri R."/>
            <person name="Samuel J.E."/>
        </authorList>
    </citation>
    <scope>NUCLEOTIDE SEQUENCE [LARGE SCALE GENOMIC DNA]</scope>
    <source>
        <strain>RSA 331 / Henzerling II</strain>
    </source>
</reference>
<name>RPIA_COXBR</name>
<feature type="chain" id="PRO_1000077063" description="Ribose-5-phosphate isomerase A">
    <location>
        <begin position="1"/>
        <end position="220"/>
    </location>
</feature>
<feature type="active site" description="Proton acceptor" evidence="1">
    <location>
        <position position="103"/>
    </location>
</feature>
<feature type="binding site" evidence="1">
    <location>
        <begin position="28"/>
        <end position="31"/>
    </location>
    <ligand>
        <name>substrate</name>
    </ligand>
</feature>
<feature type="binding site" evidence="1">
    <location>
        <begin position="81"/>
        <end position="84"/>
    </location>
    <ligand>
        <name>substrate</name>
    </ligand>
</feature>
<feature type="binding site" evidence="1">
    <location>
        <begin position="94"/>
        <end position="97"/>
    </location>
    <ligand>
        <name>substrate</name>
    </ligand>
</feature>
<feature type="binding site" evidence="1">
    <location>
        <position position="121"/>
    </location>
    <ligand>
        <name>substrate</name>
    </ligand>
</feature>
<keyword id="KW-0413">Isomerase</keyword>